<dbReference type="EMBL" id="CP000575">
    <property type="protein sequence ID" value="ABN70144.1"/>
    <property type="molecule type" value="Genomic_DNA"/>
</dbReference>
<dbReference type="RefSeq" id="WP_011839335.1">
    <property type="nucleotide sequence ID" value="NC_009033.1"/>
</dbReference>
<dbReference type="SMR" id="A3DND4"/>
<dbReference type="STRING" id="399550.Smar_1046"/>
<dbReference type="GeneID" id="4907099"/>
<dbReference type="KEGG" id="smr:Smar_1046"/>
<dbReference type="eggNOG" id="arCOG04167">
    <property type="taxonomic scope" value="Archaea"/>
</dbReference>
<dbReference type="HOGENOM" id="CLU_183474_0_0_2"/>
<dbReference type="OrthoDB" id="63594at2157"/>
<dbReference type="Proteomes" id="UP000000254">
    <property type="component" value="Chromosome"/>
</dbReference>
<dbReference type="GO" id="GO:0022625">
    <property type="term" value="C:cytosolic large ribosomal subunit"/>
    <property type="evidence" value="ECO:0007669"/>
    <property type="project" value="TreeGrafter"/>
</dbReference>
<dbReference type="GO" id="GO:0003723">
    <property type="term" value="F:RNA binding"/>
    <property type="evidence" value="ECO:0007669"/>
    <property type="project" value="InterPro"/>
</dbReference>
<dbReference type="GO" id="GO:0003735">
    <property type="term" value="F:structural constituent of ribosome"/>
    <property type="evidence" value="ECO:0007669"/>
    <property type="project" value="InterPro"/>
</dbReference>
<dbReference type="GO" id="GO:0042273">
    <property type="term" value="P:ribosomal large subunit biogenesis"/>
    <property type="evidence" value="ECO:0007669"/>
    <property type="project" value="TreeGrafter"/>
</dbReference>
<dbReference type="GO" id="GO:0006412">
    <property type="term" value="P:translation"/>
    <property type="evidence" value="ECO:0007669"/>
    <property type="project" value="UniProtKB-UniRule"/>
</dbReference>
<dbReference type="CDD" id="cd23702">
    <property type="entry name" value="eL14"/>
    <property type="match status" value="1"/>
</dbReference>
<dbReference type="FunFam" id="2.30.30.30:FF:000045">
    <property type="entry name" value="50S ribosomal protein L14e"/>
    <property type="match status" value="1"/>
</dbReference>
<dbReference type="Gene3D" id="2.30.30.30">
    <property type="match status" value="1"/>
</dbReference>
<dbReference type="HAMAP" id="MF_00721">
    <property type="entry name" value="Ribosomal_eL14"/>
    <property type="match status" value="1"/>
</dbReference>
<dbReference type="InterPro" id="IPR005824">
    <property type="entry name" value="KOW"/>
</dbReference>
<dbReference type="InterPro" id="IPR014722">
    <property type="entry name" value="Rib_uL2_dom2"/>
</dbReference>
<dbReference type="InterPro" id="IPR039660">
    <property type="entry name" value="Ribosomal_eL14"/>
</dbReference>
<dbReference type="InterPro" id="IPR023651">
    <property type="entry name" value="Ribosomal_eL14_arc"/>
</dbReference>
<dbReference type="InterPro" id="IPR008991">
    <property type="entry name" value="Translation_prot_SH3-like_sf"/>
</dbReference>
<dbReference type="NCBIfam" id="NF003320">
    <property type="entry name" value="PRK04333.1"/>
    <property type="match status" value="1"/>
</dbReference>
<dbReference type="PANTHER" id="PTHR11127">
    <property type="entry name" value="60S RIBOSOMAL PROTEIN L14"/>
    <property type="match status" value="1"/>
</dbReference>
<dbReference type="PANTHER" id="PTHR11127:SF2">
    <property type="entry name" value="LARGE RIBOSOMAL SUBUNIT PROTEIN EL14"/>
    <property type="match status" value="1"/>
</dbReference>
<dbReference type="Pfam" id="PF00467">
    <property type="entry name" value="KOW"/>
    <property type="match status" value="1"/>
</dbReference>
<dbReference type="SUPFAM" id="SSF50104">
    <property type="entry name" value="Translation proteins SH3-like domain"/>
    <property type="match status" value="1"/>
</dbReference>
<reference key="1">
    <citation type="journal article" date="2009" name="BMC Genomics">
        <title>The complete genome sequence of Staphylothermus marinus reveals differences in sulfur metabolism among heterotrophic Crenarchaeota.</title>
        <authorList>
            <person name="Anderson I.J."/>
            <person name="Dharmarajan L."/>
            <person name="Rodriguez J."/>
            <person name="Hooper S."/>
            <person name="Porat I."/>
            <person name="Ulrich L.E."/>
            <person name="Elkins J.G."/>
            <person name="Mavromatis K."/>
            <person name="Sun H."/>
            <person name="Land M."/>
            <person name="Lapidus A."/>
            <person name="Lucas S."/>
            <person name="Barry K."/>
            <person name="Huber H."/>
            <person name="Zhulin I.B."/>
            <person name="Whitman W.B."/>
            <person name="Mukhopadhyay B."/>
            <person name="Woese C."/>
            <person name="Bristow J."/>
            <person name="Kyrpides N."/>
        </authorList>
    </citation>
    <scope>NUCLEOTIDE SEQUENCE [LARGE SCALE GENOMIC DNA]</scope>
    <source>
        <strain>ATCC 43588 / DSM 3639 / JCM 9404 / F1</strain>
    </source>
</reference>
<reference key="2">
    <citation type="journal article" date="2009" name="Stand. Genomic Sci.">
        <title>Complete genome sequence of Staphylothermus marinus Stetter and Fiala 1986 type strain F1.</title>
        <authorList>
            <person name="Anderson I.J."/>
            <person name="Sun H."/>
            <person name="Lapidus A."/>
            <person name="Copeland A."/>
            <person name="Glavina Del Rio T."/>
            <person name="Tice H."/>
            <person name="Dalin E."/>
            <person name="Lucas S."/>
            <person name="Barry K."/>
            <person name="Land M."/>
            <person name="Richardson P."/>
            <person name="Huber H."/>
            <person name="Kyrpides N.C."/>
        </authorList>
    </citation>
    <scope>NUCLEOTIDE SEQUENCE [LARGE SCALE GENOMIC DNA]</scope>
    <source>
        <strain>ATCC 43588 / DSM 3639 / JCM 9404 / F1</strain>
    </source>
</reference>
<evidence type="ECO:0000255" key="1">
    <source>
        <dbReference type="HAMAP-Rule" id="MF_00721"/>
    </source>
</evidence>
<evidence type="ECO:0000305" key="2"/>
<name>RL14E_STAMF</name>
<gene>
    <name evidence="1" type="primary">rpl14e</name>
    <name type="ordered locus">Smar_1046</name>
</gene>
<organism>
    <name type="scientific">Staphylothermus marinus (strain ATCC 43588 / DSM 3639 / JCM 9404 / F1)</name>
    <dbReference type="NCBI Taxonomy" id="399550"/>
    <lineage>
        <taxon>Archaea</taxon>
        <taxon>Thermoproteota</taxon>
        <taxon>Thermoprotei</taxon>
        <taxon>Desulfurococcales</taxon>
        <taxon>Desulfurococcaceae</taxon>
        <taxon>Staphylothermus</taxon>
    </lineage>
</organism>
<proteinExistence type="inferred from homology"/>
<keyword id="KW-1185">Reference proteome</keyword>
<keyword id="KW-0687">Ribonucleoprotein</keyword>
<keyword id="KW-0689">Ribosomal protein</keyword>
<feature type="chain" id="PRO_1000083307" description="Large ribosomal subunit protein eL14">
    <location>
        <begin position="1"/>
        <end position="96"/>
    </location>
</feature>
<accession>A3DND4</accession>
<protein>
    <recommendedName>
        <fullName evidence="1">Large ribosomal subunit protein eL14</fullName>
    </recommendedName>
    <alternativeName>
        <fullName evidence="2">50S ribosomal protein L14e</fullName>
    </alternativeName>
</protein>
<sequence length="96" mass="10517">MPAIEIGRICVKVAGREAGRKCVIVDIIDENFVLITGPKSLTGVKRRRANVKHIEPLDKVIDISRGASDEEVLRAIANAGLTEFMKEIVKPKLVPV</sequence>
<comment type="similarity">
    <text evidence="1">Belongs to the eukaryotic ribosomal protein eL14 family.</text>
</comment>